<accession>Q57JA9</accession>
<reference key="1">
    <citation type="journal article" date="2005" name="Nucleic Acids Res.">
        <title>The genome sequence of Salmonella enterica serovar Choleraesuis, a highly invasive and resistant zoonotic pathogen.</title>
        <authorList>
            <person name="Chiu C.-H."/>
            <person name="Tang P."/>
            <person name="Chu C."/>
            <person name="Hu S."/>
            <person name="Bao Q."/>
            <person name="Yu J."/>
            <person name="Chou Y.-Y."/>
            <person name="Wang H.-S."/>
            <person name="Lee Y.-S."/>
        </authorList>
    </citation>
    <scope>NUCLEOTIDE SEQUENCE [LARGE SCALE GENOMIC DNA]</scope>
    <source>
        <strain>SC-B67</strain>
    </source>
</reference>
<evidence type="ECO:0000255" key="1">
    <source>
        <dbReference type="HAMAP-Rule" id="MF_01516"/>
    </source>
</evidence>
<gene>
    <name evidence="1" type="primary">mdh</name>
    <name type="ordered locus">SCH_3297</name>
</gene>
<feature type="chain" id="PRO_0000113322" description="Malate dehydrogenase">
    <location>
        <begin position="1"/>
        <end position="312"/>
    </location>
</feature>
<feature type="active site" description="Proton acceptor" evidence="1">
    <location>
        <position position="177"/>
    </location>
</feature>
<feature type="binding site" evidence="1">
    <location>
        <begin position="7"/>
        <end position="13"/>
    </location>
    <ligand>
        <name>NAD(+)</name>
        <dbReference type="ChEBI" id="CHEBI:57540"/>
    </ligand>
</feature>
<feature type="binding site" evidence="1">
    <location>
        <position position="34"/>
    </location>
    <ligand>
        <name>NAD(+)</name>
        <dbReference type="ChEBI" id="CHEBI:57540"/>
    </ligand>
</feature>
<feature type="binding site" evidence="1">
    <location>
        <position position="81"/>
    </location>
    <ligand>
        <name>substrate</name>
    </ligand>
</feature>
<feature type="binding site" evidence="1">
    <location>
        <position position="87"/>
    </location>
    <ligand>
        <name>substrate</name>
    </ligand>
</feature>
<feature type="binding site" evidence="1">
    <location>
        <position position="94"/>
    </location>
    <ligand>
        <name>NAD(+)</name>
        <dbReference type="ChEBI" id="CHEBI:57540"/>
    </ligand>
</feature>
<feature type="binding site" evidence="1">
    <location>
        <begin position="117"/>
        <end position="119"/>
    </location>
    <ligand>
        <name>NAD(+)</name>
        <dbReference type="ChEBI" id="CHEBI:57540"/>
    </ligand>
</feature>
<feature type="binding site" evidence="1">
    <location>
        <position position="119"/>
    </location>
    <ligand>
        <name>substrate</name>
    </ligand>
</feature>
<feature type="binding site" evidence="1">
    <location>
        <position position="153"/>
    </location>
    <ligand>
        <name>substrate</name>
    </ligand>
</feature>
<feature type="binding site" evidence="1">
    <location>
        <position position="227"/>
    </location>
    <ligand>
        <name>NAD(+)</name>
        <dbReference type="ChEBI" id="CHEBI:57540"/>
    </ligand>
</feature>
<protein>
    <recommendedName>
        <fullName evidence="1">Malate dehydrogenase</fullName>
        <ecNumber evidence="1">1.1.1.37</ecNumber>
    </recommendedName>
</protein>
<name>MDH_SALCH</name>
<keyword id="KW-0520">NAD</keyword>
<keyword id="KW-0560">Oxidoreductase</keyword>
<keyword id="KW-0816">Tricarboxylic acid cycle</keyword>
<organism>
    <name type="scientific">Salmonella choleraesuis (strain SC-B67)</name>
    <dbReference type="NCBI Taxonomy" id="321314"/>
    <lineage>
        <taxon>Bacteria</taxon>
        <taxon>Pseudomonadati</taxon>
        <taxon>Pseudomonadota</taxon>
        <taxon>Gammaproteobacteria</taxon>
        <taxon>Enterobacterales</taxon>
        <taxon>Enterobacteriaceae</taxon>
        <taxon>Salmonella</taxon>
    </lineage>
</organism>
<sequence length="312" mass="32492">MKVAVLGAAGGIGQALALLLKNQLPSGSELSLYDIAPVTPGVAVDLSHIPTAVKIKGFSGEDATPALEGADVVLISAGVARKPGMDRSDLFNVNAGIVKNLVQQIAKTCPKACVGIITNPVNTTVAIAAEVLKKAGVYDKNKLFGVTTLDIIRSNTFVAELKGKLPTEVEVLVIGGHSGVTILPLLSQIPGVSFTEQEAAELTKRIQNAGTEVVEAKAGGGSATLSMGQAAARFGLSLVRALQGEKGVVECAYVEGDGQYARFFSQPLLLGKNGVEERKSIGTLSAFEQHSLDAMLDTLKKDIQLGEDFINK</sequence>
<proteinExistence type="inferred from homology"/>
<dbReference type="EC" id="1.1.1.37" evidence="1"/>
<dbReference type="EMBL" id="AE017220">
    <property type="protein sequence ID" value="AAX67203.1"/>
    <property type="molecule type" value="Genomic_DNA"/>
</dbReference>
<dbReference type="RefSeq" id="WP_011264396.1">
    <property type="nucleotide sequence ID" value="NC_006905.1"/>
</dbReference>
<dbReference type="SMR" id="Q57JA9"/>
<dbReference type="KEGG" id="sec:SCH_3297"/>
<dbReference type="HOGENOM" id="CLU_047181_1_0_6"/>
<dbReference type="Proteomes" id="UP000000538">
    <property type="component" value="Chromosome"/>
</dbReference>
<dbReference type="GO" id="GO:0005737">
    <property type="term" value="C:cytoplasm"/>
    <property type="evidence" value="ECO:0007669"/>
    <property type="project" value="TreeGrafter"/>
</dbReference>
<dbReference type="GO" id="GO:0030060">
    <property type="term" value="F:L-malate dehydrogenase (NAD+) activity"/>
    <property type="evidence" value="ECO:0007669"/>
    <property type="project" value="UniProtKB-UniRule"/>
</dbReference>
<dbReference type="GO" id="GO:0006108">
    <property type="term" value="P:malate metabolic process"/>
    <property type="evidence" value="ECO:0007669"/>
    <property type="project" value="InterPro"/>
</dbReference>
<dbReference type="GO" id="GO:0006099">
    <property type="term" value="P:tricarboxylic acid cycle"/>
    <property type="evidence" value="ECO:0007669"/>
    <property type="project" value="UniProtKB-UniRule"/>
</dbReference>
<dbReference type="CDD" id="cd01337">
    <property type="entry name" value="MDH_glyoxysomal_mitochondrial"/>
    <property type="match status" value="1"/>
</dbReference>
<dbReference type="FunFam" id="3.40.50.720:FF:000017">
    <property type="entry name" value="Malate dehydrogenase"/>
    <property type="match status" value="1"/>
</dbReference>
<dbReference type="FunFam" id="3.90.110.10:FF:000001">
    <property type="entry name" value="Malate dehydrogenase"/>
    <property type="match status" value="1"/>
</dbReference>
<dbReference type="Gene3D" id="3.90.110.10">
    <property type="entry name" value="Lactate dehydrogenase/glycoside hydrolase, family 4, C-terminal"/>
    <property type="match status" value="1"/>
</dbReference>
<dbReference type="Gene3D" id="3.40.50.720">
    <property type="entry name" value="NAD(P)-binding Rossmann-like Domain"/>
    <property type="match status" value="1"/>
</dbReference>
<dbReference type="HAMAP" id="MF_01516">
    <property type="entry name" value="Malate_dehydrog_1"/>
    <property type="match status" value="1"/>
</dbReference>
<dbReference type="InterPro" id="IPR001557">
    <property type="entry name" value="L-lactate/malate_DH"/>
</dbReference>
<dbReference type="InterPro" id="IPR022383">
    <property type="entry name" value="Lactate/malate_DH_C"/>
</dbReference>
<dbReference type="InterPro" id="IPR001236">
    <property type="entry name" value="Lactate/malate_DH_N"/>
</dbReference>
<dbReference type="InterPro" id="IPR015955">
    <property type="entry name" value="Lactate_DH/Glyco_Ohase_4_C"/>
</dbReference>
<dbReference type="InterPro" id="IPR001252">
    <property type="entry name" value="Malate_DH_AS"/>
</dbReference>
<dbReference type="InterPro" id="IPR010097">
    <property type="entry name" value="Malate_DH_type1"/>
</dbReference>
<dbReference type="InterPro" id="IPR023958">
    <property type="entry name" value="Malate_DH_type1_bac"/>
</dbReference>
<dbReference type="InterPro" id="IPR036291">
    <property type="entry name" value="NAD(P)-bd_dom_sf"/>
</dbReference>
<dbReference type="NCBIfam" id="TIGR01772">
    <property type="entry name" value="MDH_euk_gproteo"/>
    <property type="match status" value="1"/>
</dbReference>
<dbReference type="PANTHER" id="PTHR11540">
    <property type="entry name" value="MALATE AND LACTATE DEHYDROGENASE"/>
    <property type="match status" value="1"/>
</dbReference>
<dbReference type="PANTHER" id="PTHR11540:SF16">
    <property type="entry name" value="MALATE DEHYDROGENASE, MITOCHONDRIAL"/>
    <property type="match status" value="1"/>
</dbReference>
<dbReference type="Pfam" id="PF02866">
    <property type="entry name" value="Ldh_1_C"/>
    <property type="match status" value="1"/>
</dbReference>
<dbReference type="Pfam" id="PF00056">
    <property type="entry name" value="Ldh_1_N"/>
    <property type="match status" value="1"/>
</dbReference>
<dbReference type="PIRSF" id="PIRSF000102">
    <property type="entry name" value="Lac_mal_DH"/>
    <property type="match status" value="1"/>
</dbReference>
<dbReference type="SUPFAM" id="SSF56327">
    <property type="entry name" value="LDH C-terminal domain-like"/>
    <property type="match status" value="1"/>
</dbReference>
<dbReference type="SUPFAM" id="SSF51735">
    <property type="entry name" value="NAD(P)-binding Rossmann-fold domains"/>
    <property type="match status" value="1"/>
</dbReference>
<dbReference type="PROSITE" id="PS00068">
    <property type="entry name" value="MDH"/>
    <property type="match status" value="1"/>
</dbReference>
<comment type="function">
    <text evidence="1">Catalyzes the reversible oxidation of malate to oxaloacetate.</text>
</comment>
<comment type="catalytic activity">
    <reaction evidence="1">
        <text>(S)-malate + NAD(+) = oxaloacetate + NADH + H(+)</text>
        <dbReference type="Rhea" id="RHEA:21432"/>
        <dbReference type="ChEBI" id="CHEBI:15378"/>
        <dbReference type="ChEBI" id="CHEBI:15589"/>
        <dbReference type="ChEBI" id="CHEBI:16452"/>
        <dbReference type="ChEBI" id="CHEBI:57540"/>
        <dbReference type="ChEBI" id="CHEBI:57945"/>
        <dbReference type="EC" id="1.1.1.37"/>
    </reaction>
</comment>
<comment type="subunit">
    <text evidence="1">Homodimer.</text>
</comment>
<comment type="similarity">
    <text evidence="1">Belongs to the LDH/MDH superfamily. MDH type 1 family.</text>
</comment>